<protein>
    <recommendedName>
        <fullName evidence="1">UPF0301 protein SAV_5129</fullName>
    </recommendedName>
</protein>
<name>Y5129_STRAW</name>
<accession>Q82D55</accession>
<keyword id="KW-1185">Reference proteome</keyword>
<sequence>MSGMTEVSSLTGRLLVATPALADPNFDRAVVLLLDHDEEGSLGVVLNRPTPVDVSDILEGWADLAGEPGVVFQGGPVSLDSALGVAVIPGGASVDGAPLGWRRVHGAIGLVDLEAPPELLAKALGSLRIFAGYAGWGPGQLEDELVEGAWYVVESEPGDVSSPSPERLWREVLRRQRNELAMVATYPDDPSLN</sequence>
<organism>
    <name type="scientific">Streptomyces avermitilis (strain ATCC 31267 / DSM 46492 / JCM 5070 / NBRC 14893 / NCIMB 12804 / NRRL 8165 / MA-4680)</name>
    <dbReference type="NCBI Taxonomy" id="227882"/>
    <lineage>
        <taxon>Bacteria</taxon>
        <taxon>Bacillati</taxon>
        <taxon>Actinomycetota</taxon>
        <taxon>Actinomycetes</taxon>
        <taxon>Kitasatosporales</taxon>
        <taxon>Streptomycetaceae</taxon>
        <taxon>Streptomyces</taxon>
    </lineage>
</organism>
<proteinExistence type="inferred from homology"/>
<reference key="1">
    <citation type="journal article" date="2001" name="Proc. Natl. Acad. Sci. U.S.A.">
        <title>Genome sequence of an industrial microorganism Streptomyces avermitilis: deducing the ability of producing secondary metabolites.</title>
        <authorList>
            <person name="Omura S."/>
            <person name="Ikeda H."/>
            <person name="Ishikawa J."/>
            <person name="Hanamoto A."/>
            <person name="Takahashi C."/>
            <person name="Shinose M."/>
            <person name="Takahashi Y."/>
            <person name="Horikawa H."/>
            <person name="Nakazawa H."/>
            <person name="Osonoe T."/>
            <person name="Kikuchi H."/>
            <person name="Shiba T."/>
            <person name="Sakaki Y."/>
            <person name="Hattori M."/>
        </authorList>
    </citation>
    <scope>NUCLEOTIDE SEQUENCE [LARGE SCALE GENOMIC DNA]</scope>
    <source>
        <strain>ATCC 31267 / DSM 46492 / JCM 5070 / NBRC 14893 / NCIMB 12804 / NRRL 8165 / MA-4680</strain>
    </source>
</reference>
<reference key="2">
    <citation type="journal article" date="2003" name="Nat. Biotechnol.">
        <title>Complete genome sequence and comparative analysis of the industrial microorganism Streptomyces avermitilis.</title>
        <authorList>
            <person name="Ikeda H."/>
            <person name="Ishikawa J."/>
            <person name="Hanamoto A."/>
            <person name="Shinose M."/>
            <person name="Kikuchi H."/>
            <person name="Shiba T."/>
            <person name="Sakaki Y."/>
            <person name="Hattori M."/>
            <person name="Omura S."/>
        </authorList>
    </citation>
    <scope>NUCLEOTIDE SEQUENCE [LARGE SCALE GENOMIC DNA]</scope>
    <source>
        <strain>ATCC 31267 / DSM 46492 / JCM 5070 / NBRC 14893 / NCIMB 12804 / NRRL 8165 / MA-4680</strain>
    </source>
</reference>
<dbReference type="EMBL" id="BA000030">
    <property type="protein sequence ID" value="BAC72841.1"/>
    <property type="molecule type" value="Genomic_DNA"/>
</dbReference>
<dbReference type="SMR" id="Q82D55"/>
<dbReference type="KEGG" id="sma:SAVERM_5129"/>
<dbReference type="eggNOG" id="COG1678">
    <property type="taxonomic scope" value="Bacteria"/>
</dbReference>
<dbReference type="HOGENOM" id="CLU_057596_2_0_11"/>
<dbReference type="OrthoDB" id="9807486at2"/>
<dbReference type="Proteomes" id="UP000000428">
    <property type="component" value="Chromosome"/>
</dbReference>
<dbReference type="GO" id="GO:0005829">
    <property type="term" value="C:cytosol"/>
    <property type="evidence" value="ECO:0007669"/>
    <property type="project" value="TreeGrafter"/>
</dbReference>
<dbReference type="Gene3D" id="3.40.1740.10">
    <property type="entry name" value="VC0467-like"/>
    <property type="match status" value="1"/>
</dbReference>
<dbReference type="HAMAP" id="MF_00758">
    <property type="entry name" value="UPF0301"/>
    <property type="match status" value="1"/>
</dbReference>
<dbReference type="InterPro" id="IPR003774">
    <property type="entry name" value="AlgH-like"/>
</dbReference>
<dbReference type="NCBIfam" id="NF001270">
    <property type="entry name" value="PRK00228.2-2"/>
    <property type="match status" value="1"/>
</dbReference>
<dbReference type="PANTHER" id="PTHR30327">
    <property type="entry name" value="UNCHARACTERIZED PROTEIN YQGE"/>
    <property type="match status" value="1"/>
</dbReference>
<dbReference type="PANTHER" id="PTHR30327:SF1">
    <property type="entry name" value="UPF0301 PROTEIN YQGE"/>
    <property type="match status" value="1"/>
</dbReference>
<dbReference type="Pfam" id="PF02622">
    <property type="entry name" value="DUF179"/>
    <property type="match status" value="1"/>
</dbReference>
<dbReference type="SUPFAM" id="SSF143456">
    <property type="entry name" value="VC0467-like"/>
    <property type="match status" value="1"/>
</dbReference>
<evidence type="ECO:0000255" key="1">
    <source>
        <dbReference type="HAMAP-Rule" id="MF_00758"/>
    </source>
</evidence>
<feature type="chain" id="PRO_0000214348" description="UPF0301 protein SAV_5129">
    <location>
        <begin position="1"/>
        <end position="193"/>
    </location>
</feature>
<comment type="similarity">
    <text evidence="1">Belongs to the UPF0301 (AlgH) family.</text>
</comment>
<gene>
    <name type="ordered locus">SAV_5129</name>
</gene>